<feature type="chain" id="PRO_1000054666" description="Large ribosomal subunit protein uL16">
    <location>
        <begin position="1"/>
        <end position="143"/>
    </location>
</feature>
<comment type="function">
    <text evidence="1">Binds 23S rRNA and is also seen to make contacts with the A and possibly P site tRNAs.</text>
</comment>
<comment type="subunit">
    <text evidence="1">Part of the 50S ribosomal subunit.</text>
</comment>
<comment type="similarity">
    <text evidence="1">Belongs to the universal ribosomal protein uL16 family.</text>
</comment>
<organism>
    <name type="scientific">Oenococcus oeni (strain ATCC BAA-331 / PSU-1)</name>
    <dbReference type="NCBI Taxonomy" id="203123"/>
    <lineage>
        <taxon>Bacteria</taxon>
        <taxon>Bacillati</taxon>
        <taxon>Bacillota</taxon>
        <taxon>Bacilli</taxon>
        <taxon>Lactobacillales</taxon>
        <taxon>Lactobacillaceae</taxon>
        <taxon>Oenococcus</taxon>
    </lineage>
</organism>
<accession>Q04G78</accession>
<reference key="1">
    <citation type="journal article" date="2006" name="Proc. Natl. Acad. Sci. U.S.A.">
        <title>Comparative genomics of the lactic acid bacteria.</title>
        <authorList>
            <person name="Makarova K.S."/>
            <person name="Slesarev A."/>
            <person name="Wolf Y.I."/>
            <person name="Sorokin A."/>
            <person name="Mirkin B."/>
            <person name="Koonin E.V."/>
            <person name="Pavlov A."/>
            <person name="Pavlova N."/>
            <person name="Karamychev V."/>
            <person name="Polouchine N."/>
            <person name="Shakhova V."/>
            <person name="Grigoriev I."/>
            <person name="Lou Y."/>
            <person name="Rohksar D."/>
            <person name="Lucas S."/>
            <person name="Huang K."/>
            <person name="Goodstein D.M."/>
            <person name="Hawkins T."/>
            <person name="Plengvidhya V."/>
            <person name="Welker D."/>
            <person name="Hughes J."/>
            <person name="Goh Y."/>
            <person name="Benson A."/>
            <person name="Baldwin K."/>
            <person name="Lee J.-H."/>
            <person name="Diaz-Muniz I."/>
            <person name="Dosti B."/>
            <person name="Smeianov V."/>
            <person name="Wechter W."/>
            <person name="Barabote R."/>
            <person name="Lorca G."/>
            <person name="Altermann E."/>
            <person name="Barrangou R."/>
            <person name="Ganesan B."/>
            <person name="Xie Y."/>
            <person name="Rawsthorne H."/>
            <person name="Tamir D."/>
            <person name="Parker C."/>
            <person name="Breidt F."/>
            <person name="Broadbent J.R."/>
            <person name="Hutkins R."/>
            <person name="O'Sullivan D."/>
            <person name="Steele J."/>
            <person name="Unlu G."/>
            <person name="Saier M.H. Jr."/>
            <person name="Klaenhammer T."/>
            <person name="Richardson P."/>
            <person name="Kozyavkin S."/>
            <person name="Weimer B.C."/>
            <person name="Mills D.A."/>
        </authorList>
    </citation>
    <scope>NUCLEOTIDE SEQUENCE [LARGE SCALE GENOMIC DNA]</scope>
    <source>
        <strain>ATCC BAA-331 / PSU-1</strain>
    </source>
</reference>
<sequence>MLVPKRVKYRRVHRGHMRGEAKGGRTVAFGDYGLQSLENNWITNRQIEAARIAITRYMKRGGKVWIKIFPQKSYTSKGVGVRMGNGKGAPEGWVAPTKRGTIMFEVGGVSEAVAKEALRLAMHKLPVKAKIVSKAEASKEVNA</sequence>
<protein>
    <recommendedName>
        <fullName evidence="1">Large ribosomal subunit protein uL16</fullName>
    </recommendedName>
    <alternativeName>
        <fullName evidence="2">50S ribosomal protein L16</fullName>
    </alternativeName>
</protein>
<proteinExistence type="inferred from homology"/>
<dbReference type="EMBL" id="CP000411">
    <property type="protein sequence ID" value="ABJ56544.1"/>
    <property type="molecule type" value="Genomic_DNA"/>
</dbReference>
<dbReference type="RefSeq" id="WP_002818461.1">
    <property type="nucleotide sequence ID" value="NC_008528.1"/>
</dbReference>
<dbReference type="SMR" id="Q04G78"/>
<dbReference type="STRING" id="203123.OEOE_0602"/>
<dbReference type="GeneID" id="75065424"/>
<dbReference type="KEGG" id="ooe:OEOE_0602"/>
<dbReference type="eggNOG" id="COG0197">
    <property type="taxonomic scope" value="Bacteria"/>
</dbReference>
<dbReference type="HOGENOM" id="CLU_078858_2_1_9"/>
<dbReference type="Proteomes" id="UP000000774">
    <property type="component" value="Chromosome"/>
</dbReference>
<dbReference type="GO" id="GO:0022625">
    <property type="term" value="C:cytosolic large ribosomal subunit"/>
    <property type="evidence" value="ECO:0007669"/>
    <property type="project" value="TreeGrafter"/>
</dbReference>
<dbReference type="GO" id="GO:0019843">
    <property type="term" value="F:rRNA binding"/>
    <property type="evidence" value="ECO:0007669"/>
    <property type="project" value="UniProtKB-UniRule"/>
</dbReference>
<dbReference type="GO" id="GO:0003735">
    <property type="term" value="F:structural constituent of ribosome"/>
    <property type="evidence" value="ECO:0007669"/>
    <property type="project" value="InterPro"/>
</dbReference>
<dbReference type="GO" id="GO:0000049">
    <property type="term" value="F:tRNA binding"/>
    <property type="evidence" value="ECO:0007669"/>
    <property type="project" value="UniProtKB-KW"/>
</dbReference>
<dbReference type="GO" id="GO:0006412">
    <property type="term" value="P:translation"/>
    <property type="evidence" value="ECO:0007669"/>
    <property type="project" value="UniProtKB-UniRule"/>
</dbReference>
<dbReference type="CDD" id="cd01433">
    <property type="entry name" value="Ribosomal_L16_L10e"/>
    <property type="match status" value="1"/>
</dbReference>
<dbReference type="FunFam" id="3.90.1170.10:FF:000001">
    <property type="entry name" value="50S ribosomal protein L16"/>
    <property type="match status" value="1"/>
</dbReference>
<dbReference type="Gene3D" id="3.90.1170.10">
    <property type="entry name" value="Ribosomal protein L10e/L16"/>
    <property type="match status" value="1"/>
</dbReference>
<dbReference type="HAMAP" id="MF_01342">
    <property type="entry name" value="Ribosomal_uL16"/>
    <property type="match status" value="1"/>
</dbReference>
<dbReference type="InterPro" id="IPR047873">
    <property type="entry name" value="Ribosomal_uL16"/>
</dbReference>
<dbReference type="InterPro" id="IPR000114">
    <property type="entry name" value="Ribosomal_uL16_bact-type"/>
</dbReference>
<dbReference type="InterPro" id="IPR020798">
    <property type="entry name" value="Ribosomal_uL16_CS"/>
</dbReference>
<dbReference type="InterPro" id="IPR016180">
    <property type="entry name" value="Ribosomal_uL16_dom"/>
</dbReference>
<dbReference type="InterPro" id="IPR036920">
    <property type="entry name" value="Ribosomal_uL16_sf"/>
</dbReference>
<dbReference type="NCBIfam" id="TIGR01164">
    <property type="entry name" value="rplP_bact"/>
    <property type="match status" value="1"/>
</dbReference>
<dbReference type="PANTHER" id="PTHR12220">
    <property type="entry name" value="50S/60S RIBOSOMAL PROTEIN L16"/>
    <property type="match status" value="1"/>
</dbReference>
<dbReference type="PANTHER" id="PTHR12220:SF13">
    <property type="entry name" value="LARGE RIBOSOMAL SUBUNIT PROTEIN UL16M"/>
    <property type="match status" value="1"/>
</dbReference>
<dbReference type="Pfam" id="PF00252">
    <property type="entry name" value="Ribosomal_L16"/>
    <property type="match status" value="1"/>
</dbReference>
<dbReference type="PRINTS" id="PR00060">
    <property type="entry name" value="RIBOSOMALL16"/>
</dbReference>
<dbReference type="SUPFAM" id="SSF54686">
    <property type="entry name" value="Ribosomal protein L16p/L10e"/>
    <property type="match status" value="1"/>
</dbReference>
<dbReference type="PROSITE" id="PS00586">
    <property type="entry name" value="RIBOSOMAL_L16_1"/>
    <property type="match status" value="1"/>
</dbReference>
<dbReference type="PROSITE" id="PS00701">
    <property type="entry name" value="RIBOSOMAL_L16_2"/>
    <property type="match status" value="1"/>
</dbReference>
<name>RL16_OENOB</name>
<evidence type="ECO:0000255" key="1">
    <source>
        <dbReference type="HAMAP-Rule" id="MF_01342"/>
    </source>
</evidence>
<evidence type="ECO:0000305" key="2"/>
<keyword id="KW-1185">Reference proteome</keyword>
<keyword id="KW-0687">Ribonucleoprotein</keyword>
<keyword id="KW-0689">Ribosomal protein</keyword>
<keyword id="KW-0694">RNA-binding</keyword>
<keyword id="KW-0699">rRNA-binding</keyword>
<keyword id="KW-0820">tRNA-binding</keyword>
<gene>
    <name evidence="1" type="primary">rplP</name>
    <name type="ordered locus">OEOE_0602</name>
</gene>